<protein>
    <recommendedName>
        <fullName>Proline dehydrogenase 2</fullName>
        <shortName>PRODH 2</shortName>
        <ecNumber>1.5.5.2</ecNumber>
    </recommendedName>
    <alternativeName>
        <fullName>Proline oxidase 2</fullName>
    </alternativeName>
</protein>
<comment type="function">
    <text evidence="3">Converts proline to delta-1-pyrroline-5-carboxylate.</text>
</comment>
<comment type="catalytic activity">
    <reaction>
        <text>L-proline + a quinone = (S)-1-pyrroline-5-carboxylate + a quinol + H(+)</text>
        <dbReference type="Rhea" id="RHEA:23784"/>
        <dbReference type="ChEBI" id="CHEBI:15378"/>
        <dbReference type="ChEBI" id="CHEBI:17388"/>
        <dbReference type="ChEBI" id="CHEBI:24646"/>
        <dbReference type="ChEBI" id="CHEBI:60039"/>
        <dbReference type="ChEBI" id="CHEBI:132124"/>
        <dbReference type="EC" id="1.5.5.2"/>
    </reaction>
</comment>
<comment type="cofactor">
    <cofactor evidence="1">
        <name>FAD</name>
        <dbReference type="ChEBI" id="CHEBI:57692"/>
    </cofactor>
</comment>
<comment type="pathway">
    <text>Amino-acid degradation; L-proline degradation into L-glutamate; L-glutamate from L-proline: step 1/2.</text>
</comment>
<comment type="similarity">
    <text evidence="5">Belongs to the proline dehydrogenase family.</text>
</comment>
<dbReference type="EC" id="1.5.5.2"/>
<dbReference type="EMBL" id="AF503437">
    <property type="protein sequence ID" value="AAM27443.1"/>
    <property type="molecule type" value="Genomic_DNA"/>
</dbReference>
<dbReference type="SMR" id="Q8L2I5"/>
<dbReference type="UniPathway" id="UPA00261">
    <property type="reaction ID" value="UER00373"/>
</dbReference>
<dbReference type="GO" id="GO:0071949">
    <property type="term" value="F:FAD binding"/>
    <property type="evidence" value="ECO:0000250"/>
    <property type="project" value="UniProtKB"/>
</dbReference>
<dbReference type="GO" id="GO:0004657">
    <property type="term" value="F:proline dehydrogenase activity"/>
    <property type="evidence" value="ECO:0000250"/>
    <property type="project" value="UniProtKB"/>
</dbReference>
<dbReference type="GO" id="GO:0006562">
    <property type="term" value="P:proline catabolic process"/>
    <property type="evidence" value="ECO:0000250"/>
    <property type="project" value="UniProtKB"/>
</dbReference>
<dbReference type="GO" id="GO:0010133">
    <property type="term" value="P:proline catabolic process to glutamate"/>
    <property type="evidence" value="ECO:0007669"/>
    <property type="project" value="UniProtKB-UniPathway"/>
</dbReference>
<dbReference type="Gene3D" id="3.20.20.220">
    <property type="match status" value="1"/>
</dbReference>
<dbReference type="InterPro" id="IPR029041">
    <property type="entry name" value="FAD-linked_oxidoreductase-like"/>
</dbReference>
<dbReference type="InterPro" id="IPR008219">
    <property type="entry name" value="PRODH_bac_arc"/>
</dbReference>
<dbReference type="InterPro" id="IPR002872">
    <property type="entry name" value="Proline_DH_dom"/>
</dbReference>
<dbReference type="InterPro" id="IPR015659">
    <property type="entry name" value="Proline_oxidase"/>
</dbReference>
<dbReference type="PANTHER" id="PTHR13914:SF0">
    <property type="entry name" value="PROLINE DEHYDROGENASE 1, MITOCHONDRIAL"/>
    <property type="match status" value="1"/>
</dbReference>
<dbReference type="PANTHER" id="PTHR13914">
    <property type="entry name" value="PROLINE OXIDASE"/>
    <property type="match status" value="1"/>
</dbReference>
<dbReference type="Pfam" id="PF01619">
    <property type="entry name" value="Pro_dh"/>
    <property type="match status" value="1"/>
</dbReference>
<dbReference type="PIRSF" id="PIRSF000196">
    <property type="entry name" value="Pro_dehydrog"/>
    <property type="match status" value="1"/>
</dbReference>
<dbReference type="SUPFAM" id="SSF51730">
    <property type="entry name" value="FAD-linked oxidoreductase"/>
    <property type="match status" value="1"/>
</dbReference>
<proteinExistence type="inferred from homology"/>
<organism>
    <name type="scientific">Bacillus subtilis subsp. natto</name>
    <dbReference type="NCBI Taxonomy" id="86029"/>
    <lineage>
        <taxon>Bacteria</taxon>
        <taxon>Bacillati</taxon>
        <taxon>Bacillota</taxon>
        <taxon>Bacilli</taxon>
        <taxon>Bacillales</taxon>
        <taxon>Bacillaceae</taxon>
        <taxon>Bacillus</taxon>
    </lineage>
</organism>
<sequence length="304" mass="35143">MVITRDFFLFLSKSGFLNKMARNWGSRIAAGKIIGGNDFNSSIPTIRQLNSQGLSVTVDHLGEFVNSAEVARERTEECIQTIATIADQELNSHVSLKMTSLGLDIDMDLVYENMTKILQTAEKHKIMVTIDMEDEVRCQKTLDIFKDFRKKYEHVSTVLQAYLYRTEKDIDDLDSLNPFLRLVKGAYKESEKVAFPEKSDVDENYKKIIRKQLLNGHYTAIATHDDKMIDFTKQLAKEHGIANDKFEFQMLYGMRSQTQLSLVKEGYNMRVFLPYGEDWYGYFMRRLAERPSNIAFAFKGMTKK</sequence>
<reference key="1">
    <citation type="submission" date="2002-04" db="EMBL/GenBank/DDBJ databases">
        <authorList>
            <person name="Chang G.-N."/>
            <person name="Yeh C.-H."/>
            <person name="Huang T.-C."/>
        </authorList>
    </citation>
    <scope>NUCLEOTIDE SEQUENCE [GENOMIC DNA]</scope>
    <source>
        <strain>DSM 1088 / BCRC 14716 / NBRC 13169</strain>
    </source>
</reference>
<feature type="chain" id="PRO_0000361668" description="Proline dehydrogenase 2">
    <location>
        <begin position="1"/>
        <end position="304"/>
    </location>
</feature>
<feature type="active site" evidence="2">
    <location>
        <position position="131"/>
    </location>
</feature>
<feature type="active site" evidence="2">
    <location>
        <position position="181"/>
    </location>
</feature>
<feature type="binding site" evidence="4">
    <location>
        <position position="97"/>
    </location>
    <ligand>
        <name>substrate</name>
    </ligand>
</feature>
<feature type="binding site" evidence="2">
    <location>
        <position position="132"/>
    </location>
    <ligand>
        <name>FAD</name>
        <dbReference type="ChEBI" id="CHEBI:57692"/>
    </ligand>
</feature>
<feature type="binding site" evidence="2">
    <location>
        <position position="160"/>
    </location>
    <ligand>
        <name>FAD</name>
        <dbReference type="ChEBI" id="CHEBI:57692"/>
    </ligand>
</feature>
<feature type="binding site" evidence="2">
    <location>
        <begin position="184"/>
        <end position="186"/>
    </location>
    <ligand>
        <name>FAD</name>
        <dbReference type="ChEBI" id="CHEBI:57692"/>
    </ligand>
</feature>
<feature type="binding site" evidence="2">
    <location>
        <begin position="223"/>
        <end position="224"/>
    </location>
    <ligand>
        <name>FAD</name>
        <dbReference type="ChEBI" id="CHEBI:57692"/>
    </ligand>
</feature>
<feature type="binding site" evidence="4">
    <location>
        <begin position="285"/>
        <end position="286"/>
    </location>
    <ligand>
        <name>substrate</name>
    </ligand>
</feature>
<feature type="site" description="Critical for catalytic activity" evidence="2">
    <location>
        <position position="272"/>
    </location>
</feature>
<accession>Q8L2I5</accession>
<name>PROD2_BACNA</name>
<keyword id="KW-0274">FAD</keyword>
<keyword id="KW-0285">Flavoprotein</keyword>
<keyword id="KW-0547">Nucleotide-binding</keyword>
<keyword id="KW-0560">Oxidoreductase</keyword>
<keyword id="KW-0642">Proline metabolism</keyword>
<evidence type="ECO:0000250" key="1"/>
<evidence type="ECO:0000250" key="2">
    <source>
        <dbReference type="UniProtKB" id="Q72IB8"/>
    </source>
</evidence>
<evidence type="ECO:0000250" key="3">
    <source>
        <dbReference type="UniProtKB" id="Q8RMG1"/>
    </source>
</evidence>
<evidence type="ECO:0000250" key="4">
    <source>
        <dbReference type="UniProtKB" id="Q9RW55"/>
    </source>
</evidence>
<evidence type="ECO:0000305" key="5"/>